<organism>
    <name type="scientific">Listeria monocytogenes serovar 1/2a (strain ATCC BAA-679 / EGD-e)</name>
    <dbReference type="NCBI Taxonomy" id="169963"/>
    <lineage>
        <taxon>Bacteria</taxon>
        <taxon>Bacillati</taxon>
        <taxon>Bacillota</taxon>
        <taxon>Bacilli</taxon>
        <taxon>Bacillales</taxon>
        <taxon>Listeriaceae</taxon>
        <taxon>Listeria</taxon>
    </lineage>
</organism>
<evidence type="ECO:0000255" key="1">
    <source>
        <dbReference type="HAMAP-Rule" id="MF_00743"/>
    </source>
</evidence>
<keyword id="KW-0963">Cytoplasm</keyword>
<keyword id="KW-0456">Lyase</keyword>
<keyword id="KW-1185">Reference proteome</keyword>
<keyword id="KW-0816">Tricarboxylic acid cycle</keyword>
<name>FUMC_LISMO</name>
<comment type="function">
    <text evidence="1">Involved in the TCA cycle. Catalyzes the stereospecific interconversion of fumarate to L-malate.</text>
</comment>
<comment type="catalytic activity">
    <reaction evidence="1">
        <text>(S)-malate = fumarate + H2O</text>
        <dbReference type="Rhea" id="RHEA:12460"/>
        <dbReference type="ChEBI" id="CHEBI:15377"/>
        <dbReference type="ChEBI" id="CHEBI:15589"/>
        <dbReference type="ChEBI" id="CHEBI:29806"/>
        <dbReference type="EC" id="4.2.1.2"/>
    </reaction>
</comment>
<comment type="pathway">
    <text evidence="1">Carbohydrate metabolism; tricarboxylic acid cycle; (S)-malate from fumarate: step 1/1.</text>
</comment>
<comment type="subunit">
    <text evidence="1">Homotetramer.</text>
</comment>
<comment type="subcellular location">
    <subcellularLocation>
        <location evidence="1">Cytoplasm</location>
    </subcellularLocation>
</comment>
<comment type="miscellaneous">
    <text evidence="1">There are 2 substrate-binding sites: the catalytic A site, and the non-catalytic B site that may play a role in the transfer of substrate or product between the active site and the solvent. Alternatively, the B site may bind allosteric effectors.</text>
</comment>
<comment type="similarity">
    <text evidence="1">Belongs to the class-II fumarase/aspartase family. Fumarase subfamily.</text>
</comment>
<gene>
    <name evidence="1" type="primary">fumC</name>
    <name type="synonym">citG</name>
    <name type="ordered locus">lmo2225</name>
</gene>
<accession>Q8Y551</accession>
<protein>
    <recommendedName>
        <fullName evidence="1">Fumarate hydratase class II</fullName>
        <shortName evidence="1">Fumarase C</shortName>
        <ecNumber evidence="1">4.2.1.2</ecNumber>
    </recommendedName>
    <alternativeName>
        <fullName evidence="1">Aerobic fumarase</fullName>
    </alternativeName>
    <alternativeName>
        <fullName evidence="1">Iron-independent fumarase</fullName>
    </alternativeName>
</protein>
<reference key="1">
    <citation type="journal article" date="2001" name="Science">
        <title>Comparative genomics of Listeria species.</title>
        <authorList>
            <person name="Glaser P."/>
            <person name="Frangeul L."/>
            <person name="Buchrieser C."/>
            <person name="Rusniok C."/>
            <person name="Amend A."/>
            <person name="Baquero F."/>
            <person name="Berche P."/>
            <person name="Bloecker H."/>
            <person name="Brandt P."/>
            <person name="Chakraborty T."/>
            <person name="Charbit A."/>
            <person name="Chetouani F."/>
            <person name="Couve E."/>
            <person name="de Daruvar A."/>
            <person name="Dehoux P."/>
            <person name="Domann E."/>
            <person name="Dominguez-Bernal G."/>
            <person name="Duchaud E."/>
            <person name="Durant L."/>
            <person name="Dussurget O."/>
            <person name="Entian K.-D."/>
            <person name="Fsihi H."/>
            <person name="Garcia-del Portillo F."/>
            <person name="Garrido P."/>
            <person name="Gautier L."/>
            <person name="Goebel W."/>
            <person name="Gomez-Lopez N."/>
            <person name="Hain T."/>
            <person name="Hauf J."/>
            <person name="Jackson D."/>
            <person name="Jones L.-M."/>
            <person name="Kaerst U."/>
            <person name="Kreft J."/>
            <person name="Kuhn M."/>
            <person name="Kunst F."/>
            <person name="Kurapkat G."/>
            <person name="Madueno E."/>
            <person name="Maitournam A."/>
            <person name="Mata Vicente J."/>
            <person name="Ng E."/>
            <person name="Nedjari H."/>
            <person name="Nordsiek G."/>
            <person name="Novella S."/>
            <person name="de Pablos B."/>
            <person name="Perez-Diaz J.-C."/>
            <person name="Purcell R."/>
            <person name="Remmel B."/>
            <person name="Rose M."/>
            <person name="Schlueter T."/>
            <person name="Simoes N."/>
            <person name="Tierrez A."/>
            <person name="Vazquez-Boland J.-A."/>
            <person name="Voss H."/>
            <person name="Wehland J."/>
            <person name="Cossart P."/>
        </authorList>
    </citation>
    <scope>NUCLEOTIDE SEQUENCE [LARGE SCALE GENOMIC DNA]</scope>
    <source>
        <strain>ATCC BAA-679 / EGD-e</strain>
    </source>
</reference>
<feature type="chain" id="PRO_0000161286" description="Fumarate hydratase class II">
    <location>
        <begin position="1"/>
        <end position="455"/>
    </location>
</feature>
<feature type="active site" description="Proton donor/acceptor" evidence="1">
    <location>
        <position position="181"/>
    </location>
</feature>
<feature type="active site" evidence="1">
    <location>
        <position position="311"/>
    </location>
</feature>
<feature type="binding site" evidence="1">
    <location>
        <begin position="96"/>
        <end position="98"/>
    </location>
    <ligand>
        <name>substrate</name>
    </ligand>
</feature>
<feature type="binding site" description="in site B" evidence="1">
    <location>
        <begin position="122"/>
        <end position="125"/>
    </location>
    <ligand>
        <name>substrate</name>
    </ligand>
</feature>
<feature type="binding site" evidence="1">
    <location>
        <begin position="132"/>
        <end position="134"/>
    </location>
    <ligand>
        <name>substrate</name>
    </ligand>
</feature>
<feature type="binding site" evidence="1">
    <location>
        <position position="180"/>
    </location>
    <ligand>
        <name>substrate</name>
    </ligand>
</feature>
<feature type="binding site" evidence="1">
    <location>
        <position position="312"/>
    </location>
    <ligand>
        <name>substrate</name>
    </ligand>
</feature>
<feature type="binding site" evidence="1">
    <location>
        <begin position="317"/>
        <end position="319"/>
    </location>
    <ligand>
        <name>substrate</name>
    </ligand>
</feature>
<feature type="site" description="Important for catalytic activity" evidence="1">
    <location>
        <position position="324"/>
    </location>
</feature>
<sequence length="455" mass="49626">MERIERDTLGEISVDATKYWGAQTERSKRNFAIGDNPMPIEIIYAFAQLKKATAKVNAAEGKLAEEKAIAIGQVCDQIIQGELDEHFPLVVWQTGSGTQSNMNVNEVIAHVANLTLGEGQIHPNDDVNMSQSSNDTFPTAMHIAAYGALVTKLLPEITKMEAVLTEKKNKYMHLVKIGRTHLQDATPLTLGQEISGWEACLTNNKNYLETSMKAILPLAIGGTAVGTGLNASRDFGDKVAEELMKQTGYPFTSDSNKYFALTSHSPINFVHGAIRSLASDLMKIANDIRLLASGPRSGIGELEIPANEPGSSIMPGKVNPTQCEAITMVAAQVMGNDVTINVAASQGNFELNVYKPVIIFNFLESIKLLADSMRSFRVHCLEGLTANEKVIETKVNDSLMLVTALNPHIGYEKAAKIAKLAFDENTTLKEAAIKTGFVTEKEFDLWINPLKMTNL</sequence>
<dbReference type="EC" id="4.2.1.2" evidence="1"/>
<dbReference type="EMBL" id="AL591982">
    <property type="protein sequence ID" value="CAD00303.1"/>
    <property type="molecule type" value="Genomic_DNA"/>
</dbReference>
<dbReference type="PIR" id="AI1352">
    <property type="entry name" value="AI1352"/>
</dbReference>
<dbReference type="RefSeq" id="NP_465749.1">
    <property type="nucleotide sequence ID" value="NC_003210.1"/>
</dbReference>
<dbReference type="RefSeq" id="WP_003731883.1">
    <property type="nucleotide sequence ID" value="NZ_CP149495.1"/>
</dbReference>
<dbReference type="SMR" id="Q8Y551"/>
<dbReference type="STRING" id="169963.gene:17594916"/>
<dbReference type="PaxDb" id="169963-lmo2225"/>
<dbReference type="EnsemblBacteria" id="CAD00303">
    <property type="protein sequence ID" value="CAD00303"/>
    <property type="gene ID" value="CAD00303"/>
</dbReference>
<dbReference type="GeneID" id="987997"/>
<dbReference type="KEGG" id="lmo:lmo2225"/>
<dbReference type="PATRIC" id="fig|169963.11.peg.2277"/>
<dbReference type="eggNOG" id="COG0114">
    <property type="taxonomic scope" value="Bacteria"/>
</dbReference>
<dbReference type="HOGENOM" id="CLU_021594_4_1_9"/>
<dbReference type="OrthoDB" id="9802809at2"/>
<dbReference type="PhylomeDB" id="Q8Y551"/>
<dbReference type="BioCyc" id="LMON169963:LMO2225-MONOMER"/>
<dbReference type="UniPathway" id="UPA00223">
    <property type="reaction ID" value="UER01007"/>
</dbReference>
<dbReference type="Proteomes" id="UP000000817">
    <property type="component" value="Chromosome"/>
</dbReference>
<dbReference type="GO" id="GO:0005737">
    <property type="term" value="C:cytoplasm"/>
    <property type="evidence" value="ECO:0007669"/>
    <property type="project" value="UniProtKB-SubCell"/>
</dbReference>
<dbReference type="GO" id="GO:0004333">
    <property type="term" value="F:fumarate hydratase activity"/>
    <property type="evidence" value="ECO:0000318"/>
    <property type="project" value="GO_Central"/>
</dbReference>
<dbReference type="GO" id="GO:0006106">
    <property type="term" value="P:fumarate metabolic process"/>
    <property type="evidence" value="ECO:0000318"/>
    <property type="project" value="GO_Central"/>
</dbReference>
<dbReference type="GO" id="GO:0006108">
    <property type="term" value="P:malate metabolic process"/>
    <property type="evidence" value="ECO:0000318"/>
    <property type="project" value="GO_Central"/>
</dbReference>
<dbReference type="GO" id="GO:0006099">
    <property type="term" value="P:tricarboxylic acid cycle"/>
    <property type="evidence" value="ECO:0000318"/>
    <property type="project" value="GO_Central"/>
</dbReference>
<dbReference type="CDD" id="cd01362">
    <property type="entry name" value="Fumarase_classII"/>
    <property type="match status" value="1"/>
</dbReference>
<dbReference type="FunFam" id="1.10.40.30:FF:000002">
    <property type="entry name" value="Fumarate hydratase class II"/>
    <property type="match status" value="1"/>
</dbReference>
<dbReference type="FunFam" id="1.10.275.10:FF:000001">
    <property type="entry name" value="Fumarate hydratase, mitochondrial"/>
    <property type="match status" value="1"/>
</dbReference>
<dbReference type="FunFam" id="1.20.200.10:FF:000001">
    <property type="entry name" value="Fumarate hydratase, mitochondrial"/>
    <property type="match status" value="1"/>
</dbReference>
<dbReference type="Gene3D" id="1.10.40.30">
    <property type="entry name" value="Fumarase/aspartase (C-terminal domain)"/>
    <property type="match status" value="1"/>
</dbReference>
<dbReference type="Gene3D" id="1.20.200.10">
    <property type="entry name" value="Fumarase/aspartase (Central domain)"/>
    <property type="match status" value="1"/>
</dbReference>
<dbReference type="Gene3D" id="1.10.275.10">
    <property type="entry name" value="Fumarase/aspartase (N-terminal domain)"/>
    <property type="match status" value="1"/>
</dbReference>
<dbReference type="HAMAP" id="MF_00743">
    <property type="entry name" value="FumaraseC"/>
    <property type="match status" value="1"/>
</dbReference>
<dbReference type="InterPro" id="IPR005677">
    <property type="entry name" value="Fum_hydII"/>
</dbReference>
<dbReference type="InterPro" id="IPR024083">
    <property type="entry name" value="Fumarase/histidase_N"/>
</dbReference>
<dbReference type="InterPro" id="IPR018951">
    <property type="entry name" value="Fumarase_C_C"/>
</dbReference>
<dbReference type="InterPro" id="IPR020557">
    <property type="entry name" value="Fumarate_lyase_CS"/>
</dbReference>
<dbReference type="InterPro" id="IPR000362">
    <property type="entry name" value="Fumarate_lyase_fam"/>
</dbReference>
<dbReference type="InterPro" id="IPR022761">
    <property type="entry name" value="Fumarate_lyase_N"/>
</dbReference>
<dbReference type="InterPro" id="IPR008948">
    <property type="entry name" value="L-Aspartase-like"/>
</dbReference>
<dbReference type="NCBIfam" id="TIGR00979">
    <property type="entry name" value="fumC_II"/>
    <property type="match status" value="1"/>
</dbReference>
<dbReference type="PANTHER" id="PTHR11444">
    <property type="entry name" value="ASPARTATEAMMONIA/ARGININOSUCCINATE/ADENYLOSUCCINATE LYASE"/>
    <property type="match status" value="1"/>
</dbReference>
<dbReference type="PANTHER" id="PTHR11444:SF1">
    <property type="entry name" value="FUMARATE HYDRATASE, MITOCHONDRIAL"/>
    <property type="match status" value="1"/>
</dbReference>
<dbReference type="Pfam" id="PF10415">
    <property type="entry name" value="FumaraseC_C"/>
    <property type="match status" value="1"/>
</dbReference>
<dbReference type="Pfam" id="PF00206">
    <property type="entry name" value="Lyase_1"/>
    <property type="match status" value="1"/>
</dbReference>
<dbReference type="PRINTS" id="PR00149">
    <property type="entry name" value="FUMRATELYASE"/>
</dbReference>
<dbReference type="SUPFAM" id="SSF48557">
    <property type="entry name" value="L-aspartase-like"/>
    <property type="match status" value="1"/>
</dbReference>
<dbReference type="PROSITE" id="PS00163">
    <property type="entry name" value="FUMARATE_LYASES"/>
    <property type="match status" value="1"/>
</dbReference>
<proteinExistence type="inferred from homology"/>